<feature type="initiator methionine" description="Removed" evidence="5">
    <location>
        <position position="1"/>
    </location>
</feature>
<feature type="chain" id="PRO_0000127565" description="Large ribosomal subunit protein eL15B">
    <location>
        <begin position="2"/>
        <end position="201"/>
    </location>
</feature>
<feature type="region of interest" description="Disordered" evidence="2">
    <location>
        <begin position="161"/>
        <end position="182"/>
    </location>
</feature>
<feature type="compositionally biased region" description="Basic residues" evidence="2">
    <location>
        <begin position="169"/>
        <end position="179"/>
    </location>
</feature>
<feature type="modified residue" description="Phosphoserine" evidence="4">
    <location>
        <position position="183"/>
    </location>
</feature>
<comment type="function">
    <text evidence="1">Component of the ribosome, a large ribonucleoprotein complex responsible for the synthesis of proteins in the cell. The small ribosomal subunit (SSU) binds messenger RNAs (mRNAs) and translates the encoded message by selecting cognate aminoacyl-transfer RNA (tRNA) molecules. The large subunit (LSU) contains the ribosomal catalytic site termed the peptidyl transferase center (PTC), which catalyzes the formation of peptide bonds, thereby polymerizing the amino acids delivered by tRNAs into a polypeptide chain. The nascent polypeptides leave the ribosome through a tunnel in the LSU and interact with protein factors that function in enzymatic processing, targeting, and the membrane insertion of nascent chains at the exit of the ribosomal tunnel.</text>
</comment>
<comment type="subunit">
    <text evidence="1">Component of the large ribosomal subunit (LSU). Mature yeast ribosomes consist of a small (40S) and a large (60S) subunit. The 40S small subunit contains 1 molecule of ribosomal RNA (18S rRNA) and at least 33 different proteins. The large 60S subunit contains 3 rRNA molecules (25S, 5.8S and 5S rRNA) and at least 46 different proteins.</text>
</comment>
<comment type="subcellular location">
    <subcellularLocation>
        <location evidence="1">Cytoplasm</location>
    </subcellularLocation>
    <subcellularLocation>
        <location evidence="3">Nucleus</location>
    </subcellularLocation>
    <subcellularLocation>
        <location evidence="3">Nucleus</location>
        <location evidence="3">Nucleolus</location>
    </subcellularLocation>
</comment>
<comment type="miscellaneous">
    <text>There are 2 genes for eL15 in S.pombe.</text>
</comment>
<comment type="similarity">
    <text evidence="7">Belongs to the eukaryotic ribosomal protein eL15 family.</text>
</comment>
<protein>
    <recommendedName>
        <fullName evidence="7">Large ribosomal subunit protein eL15B</fullName>
    </recommendedName>
    <alternativeName>
        <fullName>60S ribosomal protein L15-B</fullName>
    </alternativeName>
    <alternativeName>
        <fullName evidence="6">SP-L12</fullName>
    </alternativeName>
</protein>
<sequence length="201" mass="23822">MGAYKYLEELAKKKQSDVNLFLSRVRAWEYRQMNVIHRASRPSRPDKARRLGYKAKQGYVIYRIRVRRGGRKRPVPKGQTYGKPVHQGVNHLKYQRSARCTAEERVGRYCSNLRVLNSYWVNQDATYKFFEVILVDPSHKAIRRDPRINWIVNPVHKHRESRGLTSIGKKSRGIGKGHRYNNSPQHATWLRHNTLSLRRYR</sequence>
<organism>
    <name type="scientific">Schizosaccharomyces pombe (strain 972 / ATCC 24843)</name>
    <name type="common">Fission yeast</name>
    <dbReference type="NCBI Taxonomy" id="284812"/>
    <lineage>
        <taxon>Eukaryota</taxon>
        <taxon>Fungi</taxon>
        <taxon>Dikarya</taxon>
        <taxon>Ascomycota</taxon>
        <taxon>Taphrinomycotina</taxon>
        <taxon>Schizosaccharomycetes</taxon>
        <taxon>Schizosaccharomycetales</taxon>
        <taxon>Schizosaccharomycetaceae</taxon>
        <taxon>Schizosaccharomyces</taxon>
    </lineage>
</organism>
<gene>
    <name type="primary">rpl1502</name>
    <name type="synonym">rpl15b</name>
    <name type="ORF">SPAC1783.08c</name>
</gene>
<name>RL15B_SCHPO</name>
<keyword id="KW-0002">3D-structure</keyword>
<keyword id="KW-0963">Cytoplasm</keyword>
<keyword id="KW-0903">Direct protein sequencing</keyword>
<keyword id="KW-0539">Nucleus</keyword>
<keyword id="KW-0597">Phosphoprotein</keyword>
<keyword id="KW-1185">Reference proteome</keyword>
<keyword id="KW-0687">Ribonucleoprotein</keyword>
<keyword id="KW-0689">Ribosomal protein</keyword>
<proteinExistence type="evidence at protein level"/>
<accession>Q9US22</accession>
<evidence type="ECO:0000250" key="1">
    <source>
        <dbReference type="UniProtKB" id="P54780"/>
    </source>
</evidence>
<evidence type="ECO:0000256" key="2">
    <source>
        <dbReference type="SAM" id="MobiDB-lite"/>
    </source>
</evidence>
<evidence type="ECO:0000269" key="3">
    <source>
    </source>
</evidence>
<evidence type="ECO:0000269" key="4">
    <source>
    </source>
</evidence>
<evidence type="ECO:0000269" key="5">
    <source>
    </source>
</evidence>
<evidence type="ECO:0000303" key="6">
    <source>
    </source>
</evidence>
<evidence type="ECO:0000305" key="7"/>
<reference key="1">
    <citation type="journal article" date="2002" name="Nature">
        <title>The genome sequence of Schizosaccharomyces pombe.</title>
        <authorList>
            <person name="Wood V."/>
            <person name="Gwilliam R."/>
            <person name="Rajandream M.A."/>
            <person name="Lyne M.H."/>
            <person name="Lyne R."/>
            <person name="Stewart A."/>
            <person name="Sgouros J.G."/>
            <person name="Peat N."/>
            <person name="Hayles J."/>
            <person name="Baker S.G."/>
            <person name="Basham D."/>
            <person name="Bowman S."/>
            <person name="Brooks K."/>
            <person name="Brown D."/>
            <person name="Brown S."/>
            <person name="Chillingworth T."/>
            <person name="Churcher C.M."/>
            <person name="Collins M."/>
            <person name="Connor R."/>
            <person name="Cronin A."/>
            <person name="Davis P."/>
            <person name="Feltwell T."/>
            <person name="Fraser A."/>
            <person name="Gentles S."/>
            <person name="Goble A."/>
            <person name="Hamlin N."/>
            <person name="Harris D.E."/>
            <person name="Hidalgo J."/>
            <person name="Hodgson G."/>
            <person name="Holroyd S."/>
            <person name="Hornsby T."/>
            <person name="Howarth S."/>
            <person name="Huckle E.J."/>
            <person name="Hunt S."/>
            <person name="Jagels K."/>
            <person name="James K.D."/>
            <person name="Jones L."/>
            <person name="Jones M."/>
            <person name="Leather S."/>
            <person name="McDonald S."/>
            <person name="McLean J."/>
            <person name="Mooney P."/>
            <person name="Moule S."/>
            <person name="Mungall K.L."/>
            <person name="Murphy L.D."/>
            <person name="Niblett D."/>
            <person name="Odell C."/>
            <person name="Oliver K."/>
            <person name="O'Neil S."/>
            <person name="Pearson D."/>
            <person name="Quail M.A."/>
            <person name="Rabbinowitsch E."/>
            <person name="Rutherford K.M."/>
            <person name="Rutter S."/>
            <person name="Saunders D."/>
            <person name="Seeger K."/>
            <person name="Sharp S."/>
            <person name="Skelton J."/>
            <person name="Simmonds M.N."/>
            <person name="Squares R."/>
            <person name="Squares S."/>
            <person name="Stevens K."/>
            <person name="Taylor K."/>
            <person name="Taylor R.G."/>
            <person name="Tivey A."/>
            <person name="Walsh S.V."/>
            <person name="Warren T."/>
            <person name="Whitehead S."/>
            <person name="Woodward J.R."/>
            <person name="Volckaert G."/>
            <person name="Aert R."/>
            <person name="Robben J."/>
            <person name="Grymonprez B."/>
            <person name="Weltjens I."/>
            <person name="Vanstreels E."/>
            <person name="Rieger M."/>
            <person name="Schaefer M."/>
            <person name="Mueller-Auer S."/>
            <person name="Gabel C."/>
            <person name="Fuchs M."/>
            <person name="Duesterhoeft A."/>
            <person name="Fritzc C."/>
            <person name="Holzer E."/>
            <person name="Moestl D."/>
            <person name="Hilbert H."/>
            <person name="Borzym K."/>
            <person name="Langer I."/>
            <person name="Beck A."/>
            <person name="Lehrach H."/>
            <person name="Reinhardt R."/>
            <person name="Pohl T.M."/>
            <person name="Eger P."/>
            <person name="Zimmermann W."/>
            <person name="Wedler H."/>
            <person name="Wambutt R."/>
            <person name="Purnelle B."/>
            <person name="Goffeau A."/>
            <person name="Cadieu E."/>
            <person name="Dreano S."/>
            <person name="Gloux S."/>
            <person name="Lelaure V."/>
            <person name="Mottier S."/>
            <person name="Galibert F."/>
            <person name="Aves S.J."/>
            <person name="Xiang Z."/>
            <person name="Hunt C."/>
            <person name="Moore K."/>
            <person name="Hurst S.M."/>
            <person name="Lucas M."/>
            <person name="Rochet M."/>
            <person name="Gaillardin C."/>
            <person name="Tallada V.A."/>
            <person name="Garzon A."/>
            <person name="Thode G."/>
            <person name="Daga R.R."/>
            <person name="Cruzado L."/>
            <person name="Jimenez J."/>
            <person name="Sanchez M."/>
            <person name="del Rey F."/>
            <person name="Benito J."/>
            <person name="Dominguez A."/>
            <person name="Revuelta J.L."/>
            <person name="Moreno S."/>
            <person name="Armstrong J."/>
            <person name="Forsburg S.L."/>
            <person name="Cerutti L."/>
            <person name="Lowe T."/>
            <person name="McCombie W.R."/>
            <person name="Paulsen I."/>
            <person name="Potashkin J."/>
            <person name="Shpakovski G.V."/>
            <person name="Ussery D."/>
            <person name="Barrell B.G."/>
            <person name="Nurse P."/>
        </authorList>
    </citation>
    <scope>NUCLEOTIDE SEQUENCE [LARGE SCALE GENOMIC DNA]</scope>
    <source>
        <strain>972 / ATCC 24843</strain>
    </source>
</reference>
<reference key="2">
    <citation type="journal article" date="1983" name="Mol. Gen. Genet.">
        <title>Yeast ribosomal proteins: VII. Cytoplasmic ribosomal proteins from Schizosaccharomyces pombe.</title>
        <authorList>
            <person name="Otaka E."/>
            <person name="Higo K."/>
            <person name="Itoh T."/>
        </authorList>
    </citation>
    <scope>PROTEIN SEQUENCE OF 2-30</scope>
</reference>
<reference key="3">
    <citation type="journal article" date="2006" name="Nat. Biotechnol.">
        <title>ORFeome cloning and global analysis of protein localization in the fission yeast Schizosaccharomyces pombe.</title>
        <authorList>
            <person name="Matsuyama A."/>
            <person name="Arai R."/>
            <person name="Yashiroda Y."/>
            <person name="Shirai A."/>
            <person name="Kamata A."/>
            <person name="Sekido S."/>
            <person name="Kobayashi Y."/>
            <person name="Hashimoto A."/>
            <person name="Hamamoto M."/>
            <person name="Hiraoka Y."/>
            <person name="Horinouchi S."/>
            <person name="Yoshida M."/>
        </authorList>
    </citation>
    <scope>SUBCELLULAR LOCATION [LARGE SCALE ANALYSIS]</scope>
</reference>
<reference key="4">
    <citation type="journal article" date="2008" name="J. Proteome Res.">
        <title>Phosphoproteome analysis of fission yeast.</title>
        <authorList>
            <person name="Wilson-Grady J.T."/>
            <person name="Villen J."/>
            <person name="Gygi S.P."/>
        </authorList>
    </citation>
    <scope>PHOSPHORYLATION [LARGE SCALE ANALYSIS] AT SER-183</scope>
    <scope>IDENTIFICATION BY MASS SPECTROMETRY</scope>
</reference>
<dbReference type="EMBL" id="CU329670">
    <property type="protein sequence ID" value="CAB66171.1"/>
    <property type="molecule type" value="Genomic_DNA"/>
</dbReference>
<dbReference type="PIR" id="T50110">
    <property type="entry name" value="T50110"/>
</dbReference>
<dbReference type="RefSeq" id="NP_593663.1">
    <property type="nucleotide sequence ID" value="NM_001019095.2"/>
</dbReference>
<dbReference type="PDB" id="9AXT">
    <property type="method" value="EM"/>
    <property type="resolution" value="2.40 A"/>
    <property type="chains" value="BZ=1-201"/>
</dbReference>
<dbReference type="PDB" id="9AXU">
    <property type="method" value="EM"/>
    <property type="resolution" value="1.94 A"/>
    <property type="chains" value="Z=1-201"/>
</dbReference>
<dbReference type="PDB" id="9AXV">
    <property type="method" value="EM"/>
    <property type="resolution" value="2.40 A"/>
    <property type="chains" value="BZ=1-201"/>
</dbReference>
<dbReference type="PDBsum" id="9AXT"/>
<dbReference type="PDBsum" id="9AXU"/>
<dbReference type="PDBsum" id="9AXV"/>
<dbReference type="EMDB" id="EMD-43972"/>
<dbReference type="EMDB" id="EMD-43973"/>
<dbReference type="EMDB" id="EMD-43976"/>
<dbReference type="SMR" id="Q9US22"/>
<dbReference type="BioGRID" id="278834">
    <property type="interactions" value="8"/>
</dbReference>
<dbReference type="FunCoup" id="Q9US22">
    <property type="interactions" value="616"/>
</dbReference>
<dbReference type="STRING" id="284812.Q9US22"/>
<dbReference type="iPTMnet" id="Q9US22"/>
<dbReference type="PaxDb" id="4896-SPAC1783.08c.1"/>
<dbReference type="EnsemblFungi" id="SPAC1783.08c.1">
    <property type="protein sequence ID" value="SPAC1783.08c.1:pep"/>
    <property type="gene ID" value="SPAC1783.08c"/>
</dbReference>
<dbReference type="GeneID" id="2542370"/>
<dbReference type="KEGG" id="spo:2542370"/>
<dbReference type="PomBase" id="SPAC1783.08c">
    <property type="gene designation" value="rpl1502"/>
</dbReference>
<dbReference type="VEuPathDB" id="FungiDB:SPAC1783.08c"/>
<dbReference type="eggNOG" id="KOG1678">
    <property type="taxonomic scope" value="Eukaryota"/>
</dbReference>
<dbReference type="HOGENOM" id="CLU_080796_0_0_1"/>
<dbReference type="InParanoid" id="Q9US22"/>
<dbReference type="OMA" id="YIRDAWK"/>
<dbReference type="PhylomeDB" id="Q9US22"/>
<dbReference type="Reactome" id="R-SPO-156827">
    <property type="pathway name" value="L13a-mediated translational silencing of Ceruloplasmin expression"/>
</dbReference>
<dbReference type="Reactome" id="R-SPO-1799339">
    <property type="pathway name" value="SRP-dependent cotranslational protein targeting to membrane"/>
</dbReference>
<dbReference type="Reactome" id="R-SPO-72689">
    <property type="pathway name" value="Formation of a pool of free 40S subunits"/>
</dbReference>
<dbReference type="Reactome" id="R-SPO-72706">
    <property type="pathway name" value="GTP hydrolysis and joining of the 60S ribosomal subunit"/>
</dbReference>
<dbReference type="Reactome" id="R-SPO-975956">
    <property type="pathway name" value="Nonsense Mediated Decay (NMD) independent of the Exon Junction Complex (EJC)"/>
</dbReference>
<dbReference type="Reactome" id="R-SPO-975957">
    <property type="pathway name" value="Nonsense Mediated Decay (NMD) enhanced by the Exon Junction Complex (EJC)"/>
</dbReference>
<dbReference type="PRO" id="PR:Q9US22"/>
<dbReference type="Proteomes" id="UP000002485">
    <property type="component" value="Chromosome I"/>
</dbReference>
<dbReference type="GO" id="GO:0022625">
    <property type="term" value="C:cytosolic large ribosomal subunit"/>
    <property type="evidence" value="ECO:0000269"/>
    <property type="project" value="PomBase"/>
</dbReference>
<dbReference type="GO" id="GO:0005730">
    <property type="term" value="C:nucleolus"/>
    <property type="evidence" value="ECO:0007005"/>
    <property type="project" value="PomBase"/>
</dbReference>
<dbReference type="GO" id="GO:0005634">
    <property type="term" value="C:nucleus"/>
    <property type="evidence" value="ECO:0007005"/>
    <property type="project" value="PomBase"/>
</dbReference>
<dbReference type="GO" id="GO:0003723">
    <property type="term" value="F:RNA binding"/>
    <property type="evidence" value="ECO:0000318"/>
    <property type="project" value="GO_Central"/>
</dbReference>
<dbReference type="GO" id="GO:0003735">
    <property type="term" value="F:structural constituent of ribosome"/>
    <property type="evidence" value="ECO:0000318"/>
    <property type="project" value="GO_Central"/>
</dbReference>
<dbReference type="GO" id="GO:0002181">
    <property type="term" value="P:cytoplasmic translation"/>
    <property type="evidence" value="ECO:0000318"/>
    <property type="project" value="GO_Central"/>
</dbReference>
<dbReference type="FunFam" id="3.40.1120.10:FF:000001">
    <property type="entry name" value="Ribosomal protein L15"/>
    <property type="match status" value="1"/>
</dbReference>
<dbReference type="Gene3D" id="3.40.1120.10">
    <property type="entry name" value="Ribosomal protein l15e"/>
    <property type="match status" value="1"/>
</dbReference>
<dbReference type="InterPro" id="IPR024794">
    <property type="entry name" value="Rbsml_eL15_core_dom_sf"/>
</dbReference>
<dbReference type="InterPro" id="IPR000439">
    <property type="entry name" value="Ribosomal_eL15"/>
</dbReference>
<dbReference type="InterPro" id="IPR020925">
    <property type="entry name" value="Ribosomal_eL15_CS"/>
</dbReference>
<dbReference type="InterPro" id="IPR012678">
    <property type="entry name" value="Ribosomal_uL23/eL15/eS24_sf"/>
</dbReference>
<dbReference type="NCBIfam" id="NF003269">
    <property type="entry name" value="PRK04243.1"/>
    <property type="match status" value="1"/>
</dbReference>
<dbReference type="PANTHER" id="PTHR11847:SF4">
    <property type="entry name" value="LARGE RIBOSOMAL SUBUNIT PROTEIN EL15"/>
    <property type="match status" value="1"/>
</dbReference>
<dbReference type="PANTHER" id="PTHR11847">
    <property type="entry name" value="RIBOSOMAL PROTEIN L15"/>
    <property type="match status" value="1"/>
</dbReference>
<dbReference type="Pfam" id="PF00827">
    <property type="entry name" value="Ribosomal_L15e"/>
    <property type="match status" value="1"/>
</dbReference>
<dbReference type="SMART" id="SM01384">
    <property type="entry name" value="Ribosomal_L15e"/>
    <property type="match status" value="1"/>
</dbReference>
<dbReference type="SUPFAM" id="SSF54189">
    <property type="entry name" value="Ribosomal proteins S24e, L23 and L15e"/>
    <property type="match status" value="1"/>
</dbReference>
<dbReference type="PROSITE" id="PS01194">
    <property type="entry name" value="RIBOSOMAL_L15E"/>
    <property type="match status" value="1"/>
</dbReference>